<name>GPMA_XANOP</name>
<proteinExistence type="inferred from homology"/>
<dbReference type="EC" id="5.4.2.11" evidence="1"/>
<dbReference type="EMBL" id="CP000967">
    <property type="protein sequence ID" value="ACD57997.1"/>
    <property type="molecule type" value="Genomic_DNA"/>
</dbReference>
<dbReference type="RefSeq" id="WP_012444355.1">
    <property type="nucleotide sequence ID" value="NC_010717.2"/>
</dbReference>
<dbReference type="SMR" id="B2SRM8"/>
<dbReference type="KEGG" id="xop:PXO_04761"/>
<dbReference type="eggNOG" id="COG0588">
    <property type="taxonomic scope" value="Bacteria"/>
</dbReference>
<dbReference type="HOGENOM" id="CLU_033323_1_1_6"/>
<dbReference type="UniPathway" id="UPA00109">
    <property type="reaction ID" value="UER00186"/>
</dbReference>
<dbReference type="Proteomes" id="UP000001740">
    <property type="component" value="Chromosome"/>
</dbReference>
<dbReference type="GO" id="GO:0004619">
    <property type="term" value="F:phosphoglycerate mutase activity"/>
    <property type="evidence" value="ECO:0007669"/>
    <property type="project" value="UniProtKB-EC"/>
</dbReference>
<dbReference type="GO" id="GO:0006094">
    <property type="term" value="P:gluconeogenesis"/>
    <property type="evidence" value="ECO:0007669"/>
    <property type="project" value="UniProtKB-UniRule"/>
</dbReference>
<dbReference type="GO" id="GO:0006096">
    <property type="term" value="P:glycolytic process"/>
    <property type="evidence" value="ECO:0007669"/>
    <property type="project" value="UniProtKB-UniRule"/>
</dbReference>
<dbReference type="CDD" id="cd07067">
    <property type="entry name" value="HP_PGM_like"/>
    <property type="match status" value="1"/>
</dbReference>
<dbReference type="FunFam" id="3.40.50.1240:FF:000003">
    <property type="entry name" value="2,3-bisphosphoglycerate-dependent phosphoglycerate mutase"/>
    <property type="match status" value="1"/>
</dbReference>
<dbReference type="Gene3D" id="3.40.50.1240">
    <property type="entry name" value="Phosphoglycerate mutase-like"/>
    <property type="match status" value="1"/>
</dbReference>
<dbReference type="HAMAP" id="MF_01039">
    <property type="entry name" value="PGAM_GpmA"/>
    <property type="match status" value="1"/>
</dbReference>
<dbReference type="InterPro" id="IPR013078">
    <property type="entry name" value="His_Pase_superF_clade-1"/>
</dbReference>
<dbReference type="InterPro" id="IPR029033">
    <property type="entry name" value="His_PPase_superfam"/>
</dbReference>
<dbReference type="InterPro" id="IPR001345">
    <property type="entry name" value="PG/BPGM_mutase_AS"/>
</dbReference>
<dbReference type="InterPro" id="IPR005952">
    <property type="entry name" value="Phosphogly_mut1"/>
</dbReference>
<dbReference type="NCBIfam" id="TIGR01258">
    <property type="entry name" value="pgm_1"/>
    <property type="match status" value="1"/>
</dbReference>
<dbReference type="NCBIfam" id="NF010713">
    <property type="entry name" value="PRK14115.1"/>
    <property type="match status" value="1"/>
</dbReference>
<dbReference type="PANTHER" id="PTHR11931">
    <property type="entry name" value="PHOSPHOGLYCERATE MUTASE"/>
    <property type="match status" value="1"/>
</dbReference>
<dbReference type="Pfam" id="PF00300">
    <property type="entry name" value="His_Phos_1"/>
    <property type="match status" value="2"/>
</dbReference>
<dbReference type="PIRSF" id="PIRSF000709">
    <property type="entry name" value="6PFK_2-Ptase"/>
    <property type="match status" value="1"/>
</dbReference>
<dbReference type="SMART" id="SM00855">
    <property type="entry name" value="PGAM"/>
    <property type="match status" value="1"/>
</dbReference>
<dbReference type="SUPFAM" id="SSF53254">
    <property type="entry name" value="Phosphoglycerate mutase-like"/>
    <property type="match status" value="1"/>
</dbReference>
<dbReference type="PROSITE" id="PS00175">
    <property type="entry name" value="PG_MUTASE"/>
    <property type="match status" value="1"/>
</dbReference>
<accession>B2SRM8</accession>
<comment type="function">
    <text evidence="1">Catalyzes the interconversion of 2-phosphoglycerate and 3-phosphoglycerate.</text>
</comment>
<comment type="catalytic activity">
    <reaction evidence="1">
        <text>(2R)-2-phosphoglycerate = (2R)-3-phosphoglycerate</text>
        <dbReference type="Rhea" id="RHEA:15901"/>
        <dbReference type="ChEBI" id="CHEBI:58272"/>
        <dbReference type="ChEBI" id="CHEBI:58289"/>
        <dbReference type="EC" id="5.4.2.11"/>
    </reaction>
</comment>
<comment type="pathway">
    <text evidence="1">Carbohydrate degradation; glycolysis; pyruvate from D-glyceraldehyde 3-phosphate: step 3/5.</text>
</comment>
<comment type="subunit">
    <text evidence="1">Homodimer.</text>
</comment>
<comment type="similarity">
    <text evidence="1">Belongs to the phosphoglycerate mutase family. BPG-dependent PGAM subfamily.</text>
</comment>
<organism>
    <name type="scientific">Xanthomonas oryzae pv. oryzae (strain PXO99A)</name>
    <dbReference type="NCBI Taxonomy" id="360094"/>
    <lineage>
        <taxon>Bacteria</taxon>
        <taxon>Pseudomonadati</taxon>
        <taxon>Pseudomonadota</taxon>
        <taxon>Gammaproteobacteria</taxon>
        <taxon>Lysobacterales</taxon>
        <taxon>Lysobacteraceae</taxon>
        <taxon>Xanthomonas</taxon>
    </lineage>
</organism>
<gene>
    <name evidence="1" type="primary">gpmA</name>
    <name type="ordered locus">PXO_04761</name>
</gene>
<feature type="chain" id="PRO_1000135992" description="2,3-bisphosphoglycerate-dependent phosphoglycerate mutase">
    <location>
        <begin position="1"/>
        <end position="249"/>
    </location>
</feature>
<feature type="active site" description="Tele-phosphohistidine intermediate" evidence="1">
    <location>
        <position position="10"/>
    </location>
</feature>
<feature type="active site" description="Proton donor/acceptor" evidence="1">
    <location>
        <position position="88"/>
    </location>
</feature>
<feature type="binding site" evidence="1">
    <location>
        <begin position="9"/>
        <end position="16"/>
    </location>
    <ligand>
        <name>substrate</name>
    </ligand>
</feature>
<feature type="binding site" evidence="1">
    <location>
        <begin position="22"/>
        <end position="23"/>
    </location>
    <ligand>
        <name>substrate</name>
    </ligand>
</feature>
<feature type="binding site" evidence="1">
    <location>
        <position position="61"/>
    </location>
    <ligand>
        <name>substrate</name>
    </ligand>
</feature>
<feature type="binding site" evidence="1">
    <location>
        <begin position="88"/>
        <end position="91"/>
    </location>
    <ligand>
        <name>substrate</name>
    </ligand>
</feature>
<feature type="binding site" evidence="1">
    <location>
        <position position="99"/>
    </location>
    <ligand>
        <name>substrate</name>
    </ligand>
</feature>
<feature type="binding site" evidence="1">
    <location>
        <begin position="115"/>
        <end position="116"/>
    </location>
    <ligand>
        <name>substrate</name>
    </ligand>
</feature>
<feature type="binding site" evidence="1">
    <location>
        <begin position="184"/>
        <end position="185"/>
    </location>
    <ligand>
        <name>substrate</name>
    </ligand>
</feature>
<feature type="site" description="Transition state stabilizer" evidence="1">
    <location>
        <position position="183"/>
    </location>
</feature>
<protein>
    <recommendedName>
        <fullName evidence="1">2,3-bisphosphoglycerate-dependent phosphoglycerate mutase</fullName>
        <shortName evidence="1">BPG-dependent PGAM</shortName>
        <shortName evidence="1">PGAM</shortName>
        <shortName evidence="1">Phosphoglyceromutase</shortName>
        <shortName evidence="1">dPGM</shortName>
        <ecNumber evidence="1">5.4.2.11</ecNumber>
    </recommendedName>
</protein>
<sequence length="249" mass="27933">MTRKLVLLRHGQSQWNLDNRFTGWVDVELTDQGCQEAVAAGKLMKDEGLQFDVAHTSVLKRAIHTLQGALKELDQDWLPVSKSWRLNERHYGGLQGLDKAETAAKHGEEQVKIWRRSYDIPPPAMDVDDPGHPCHDRRYATLDRNALPGTESLATTLVRVLPYWHDAIAPQLKAGQTVLVTAHGNSLRALYKYLNDVSNEQILELNIPTGIPLLFELDDNLQVRSFRYLGDPEAAKRAAEAVANQGKAK</sequence>
<evidence type="ECO:0000255" key="1">
    <source>
        <dbReference type="HAMAP-Rule" id="MF_01039"/>
    </source>
</evidence>
<reference key="1">
    <citation type="journal article" date="2008" name="BMC Genomics">
        <title>Genome sequence and rapid evolution of the rice pathogen Xanthomonas oryzae pv. oryzae PXO99A.</title>
        <authorList>
            <person name="Salzberg S.L."/>
            <person name="Sommer D.D."/>
            <person name="Schatz M.C."/>
            <person name="Phillippy A.M."/>
            <person name="Rabinowicz P.D."/>
            <person name="Tsuge S."/>
            <person name="Furutani A."/>
            <person name="Ochiai H."/>
            <person name="Delcher A.L."/>
            <person name="Kelley D."/>
            <person name="Madupu R."/>
            <person name="Puiu D."/>
            <person name="Radune D."/>
            <person name="Shumway M."/>
            <person name="Trapnell C."/>
            <person name="Aparna G."/>
            <person name="Jha G."/>
            <person name="Pandey A."/>
            <person name="Patil P.B."/>
            <person name="Ishihara H."/>
            <person name="Meyer D.F."/>
            <person name="Szurek B."/>
            <person name="Verdier V."/>
            <person name="Koebnik R."/>
            <person name="Dow J.M."/>
            <person name="Ryan R.P."/>
            <person name="Hirata H."/>
            <person name="Tsuyumu S."/>
            <person name="Won Lee S."/>
            <person name="Seo Y.-S."/>
            <person name="Sriariyanum M."/>
            <person name="Ronald P.C."/>
            <person name="Sonti R.V."/>
            <person name="Van Sluys M.-A."/>
            <person name="Leach J.E."/>
            <person name="White F.F."/>
            <person name="Bogdanove A.J."/>
        </authorList>
    </citation>
    <scope>NUCLEOTIDE SEQUENCE [LARGE SCALE GENOMIC DNA]</scope>
    <source>
        <strain>PXO99A</strain>
    </source>
</reference>
<keyword id="KW-0312">Gluconeogenesis</keyword>
<keyword id="KW-0324">Glycolysis</keyword>
<keyword id="KW-0413">Isomerase</keyword>